<accession>B4LQD0</accession>
<dbReference type="EMBL" id="CH940649">
    <property type="protein sequence ID" value="EDW63380.1"/>
    <property type="molecule type" value="Genomic_DNA"/>
</dbReference>
<dbReference type="SMR" id="B4LQD0"/>
<dbReference type="FunCoup" id="B4LQD0">
    <property type="interactions" value="2269"/>
</dbReference>
<dbReference type="STRING" id="7244.B4LQD0"/>
<dbReference type="EnsemblMetazoa" id="FBtr0230732">
    <property type="protein sequence ID" value="FBpp0229224"/>
    <property type="gene ID" value="FBgn0202011"/>
</dbReference>
<dbReference type="EnsemblMetazoa" id="XM_002051189.3">
    <property type="protein sequence ID" value="XP_002051225.1"/>
    <property type="gene ID" value="LOC6628802"/>
</dbReference>
<dbReference type="GeneID" id="6628802"/>
<dbReference type="KEGG" id="dvi:6628802"/>
<dbReference type="eggNOG" id="KOG2481">
    <property type="taxonomic scope" value="Eukaryota"/>
</dbReference>
<dbReference type="HOGENOM" id="CLU_019619_0_0_1"/>
<dbReference type="InParanoid" id="B4LQD0"/>
<dbReference type="OMA" id="QKVTWIV"/>
<dbReference type="OrthoDB" id="10264910at2759"/>
<dbReference type="PhylomeDB" id="B4LQD0"/>
<dbReference type="Proteomes" id="UP000008792">
    <property type="component" value="Unassembled WGS sequence"/>
</dbReference>
<dbReference type="GO" id="GO:0005730">
    <property type="term" value="C:nucleolus"/>
    <property type="evidence" value="ECO:0000250"/>
    <property type="project" value="UniProtKB"/>
</dbReference>
<dbReference type="GO" id="GO:0005654">
    <property type="term" value="C:nucleoplasm"/>
    <property type="evidence" value="ECO:0000250"/>
    <property type="project" value="UniProtKB"/>
</dbReference>
<dbReference type="GO" id="GO:0070545">
    <property type="term" value="C:PeBoW complex"/>
    <property type="evidence" value="ECO:0007669"/>
    <property type="project" value="TreeGrafter"/>
</dbReference>
<dbReference type="GO" id="GO:0030687">
    <property type="term" value="C:preribosome, large subunit precursor"/>
    <property type="evidence" value="ECO:0007669"/>
    <property type="project" value="UniProtKB-UniRule"/>
</dbReference>
<dbReference type="GO" id="GO:0043021">
    <property type="term" value="F:ribonucleoprotein complex binding"/>
    <property type="evidence" value="ECO:0007669"/>
    <property type="project" value="UniProtKB-UniRule"/>
</dbReference>
<dbReference type="GO" id="GO:0003723">
    <property type="term" value="F:RNA binding"/>
    <property type="evidence" value="ECO:0007669"/>
    <property type="project" value="TreeGrafter"/>
</dbReference>
<dbReference type="GO" id="GO:0000466">
    <property type="term" value="P:maturation of 5.8S rRNA from tricistronic rRNA transcript (SSU-rRNA, 5.8S rRNA, LSU-rRNA)"/>
    <property type="evidence" value="ECO:0007669"/>
    <property type="project" value="UniProtKB-UniRule"/>
</dbReference>
<dbReference type="GO" id="GO:0000463">
    <property type="term" value="P:maturation of LSU-rRNA from tricistronic rRNA transcript (SSU-rRNA, 5.8S rRNA, LSU-rRNA)"/>
    <property type="evidence" value="ECO:0000250"/>
    <property type="project" value="UniProtKB"/>
</dbReference>
<dbReference type="CDD" id="cd17709">
    <property type="entry name" value="BRCT_pescadillo_like"/>
    <property type="match status" value="1"/>
</dbReference>
<dbReference type="FunFam" id="3.40.50.10190:FF:000002">
    <property type="entry name" value="Pescadillo homolog"/>
    <property type="match status" value="1"/>
</dbReference>
<dbReference type="Gene3D" id="3.40.50.10190">
    <property type="entry name" value="BRCT domain"/>
    <property type="match status" value="1"/>
</dbReference>
<dbReference type="HAMAP" id="MF_03028">
    <property type="entry name" value="Pescadillo"/>
    <property type="match status" value="1"/>
</dbReference>
<dbReference type="InterPro" id="IPR001357">
    <property type="entry name" value="BRCT_dom"/>
</dbReference>
<dbReference type="InterPro" id="IPR036420">
    <property type="entry name" value="BRCT_dom_sf"/>
</dbReference>
<dbReference type="InterPro" id="IPR010613">
    <property type="entry name" value="PES"/>
</dbReference>
<dbReference type="PANTHER" id="PTHR12221">
    <property type="entry name" value="PESCADILLO - RELATED"/>
    <property type="match status" value="1"/>
</dbReference>
<dbReference type="PANTHER" id="PTHR12221:SF6">
    <property type="entry name" value="PESCADILLO HOMOLOG"/>
    <property type="match status" value="1"/>
</dbReference>
<dbReference type="Pfam" id="PF16589">
    <property type="entry name" value="BRCT_2"/>
    <property type="match status" value="1"/>
</dbReference>
<dbReference type="Pfam" id="PF06732">
    <property type="entry name" value="Pescadillo_N"/>
    <property type="match status" value="1"/>
</dbReference>
<dbReference type="SMART" id="SM00292">
    <property type="entry name" value="BRCT"/>
    <property type="match status" value="1"/>
</dbReference>
<dbReference type="SUPFAM" id="SSF52113">
    <property type="entry name" value="BRCT domain"/>
    <property type="match status" value="1"/>
</dbReference>
<dbReference type="PROSITE" id="PS50172">
    <property type="entry name" value="BRCT"/>
    <property type="match status" value="1"/>
</dbReference>
<sequence length="633" mass="74245">MRRPKKYEAGEATQYISRRAALRKLQLSLNDFRRLCILKGVYPREPKHRRRAQKGSSDIKILYHAKDIRFLLHEPIVWTLRDYKIFAKKSGRDRAIKDFRNLKRRLAMFPEIKLDHIVKERYPTFIDALKDLDDCLTLLFLFSTFPSLHLIPREQSNLCRRLTIEFLHYVIASKSLRKVFISIKGYYFQAEIKGQKVTWIVPHYYPFKPQSRQEVDFKVMSIFVEFYTIMLGFTNFRLYHGLNLAYPPQFPSNMLQDNADTLKDESSFVSDRITALNFELLRTDKVQEDEEEPDIDMELLEQDGDSKRIIKMKQEAQEVSRLRTLFKGLKFFINREVPREPLVIIIRSFGGKVSWDSSVFSGATYDESDETITHQIVDRPSLSTQYISRDYIQPQWIFDCVNQRQLLPTNKYFLGEPLPPHLSPFVDAKRDTYIPPEEKALHDPSLIETHAQSEDESEDDAAAEEEDTVEQELLDAQLQRAYQQETAEYKKYGGADGVNEDEEDSDEEDFDGEEQESDDDDEEELDEKEKRLLEEKQKMSVQSGKVHKVNKRQVHKAEVDEHRLQARMVKPRHRNLFRKLIREKQAKEKEEWLLRKKRRTIETDAKEAKKLAKREARKAAAAAAAAAAQLGAK</sequence>
<gene>
    <name type="ORF">GJ14807</name>
</gene>
<protein>
    <recommendedName>
        <fullName evidence="2">Pescadillo homolog</fullName>
    </recommendedName>
</protein>
<name>PESC_DROVI</name>
<proteinExistence type="inferred from homology"/>
<keyword id="KW-0175">Coiled coil</keyword>
<keyword id="KW-0539">Nucleus</keyword>
<keyword id="KW-0597">Phosphoprotein</keyword>
<keyword id="KW-1185">Reference proteome</keyword>
<keyword id="KW-0690">Ribosome biogenesis</keyword>
<keyword id="KW-0698">rRNA processing</keyword>
<feature type="chain" id="PRO_0000370461" description="Pescadillo homolog">
    <location>
        <begin position="1"/>
        <end position="633"/>
    </location>
</feature>
<feature type="domain" description="BRCT" evidence="2">
    <location>
        <begin position="321"/>
        <end position="414"/>
    </location>
</feature>
<feature type="region of interest" description="Disordered" evidence="3">
    <location>
        <begin position="450"/>
        <end position="470"/>
    </location>
</feature>
<feature type="region of interest" description="Disordered" evidence="3">
    <location>
        <begin position="490"/>
        <end position="567"/>
    </location>
</feature>
<feature type="coiled-coil region" evidence="2">
    <location>
        <begin position="593"/>
        <end position="626"/>
    </location>
</feature>
<feature type="compositionally biased region" description="Acidic residues" evidence="3">
    <location>
        <begin position="454"/>
        <end position="470"/>
    </location>
</feature>
<feature type="compositionally biased region" description="Acidic residues" evidence="3">
    <location>
        <begin position="498"/>
        <end position="526"/>
    </location>
</feature>
<feature type="compositionally biased region" description="Basic and acidic residues" evidence="3">
    <location>
        <begin position="527"/>
        <end position="538"/>
    </location>
</feature>
<feature type="compositionally biased region" description="Basic residues" evidence="3">
    <location>
        <begin position="545"/>
        <end position="554"/>
    </location>
</feature>
<feature type="compositionally biased region" description="Basic and acidic residues" evidence="3">
    <location>
        <begin position="555"/>
        <end position="564"/>
    </location>
</feature>
<feature type="modified residue" description="Phosphoserine" evidence="1">
    <location>
        <position position="453"/>
    </location>
</feature>
<feature type="modified residue" description="Phosphoserine" evidence="1">
    <location>
        <position position="457"/>
    </location>
</feature>
<evidence type="ECO:0000250" key="1"/>
<evidence type="ECO:0000255" key="2">
    <source>
        <dbReference type="HAMAP-Rule" id="MF_03028"/>
    </source>
</evidence>
<evidence type="ECO:0000256" key="3">
    <source>
        <dbReference type="SAM" id="MobiDB-lite"/>
    </source>
</evidence>
<organism>
    <name type="scientific">Drosophila virilis</name>
    <name type="common">Fruit fly</name>
    <dbReference type="NCBI Taxonomy" id="7244"/>
    <lineage>
        <taxon>Eukaryota</taxon>
        <taxon>Metazoa</taxon>
        <taxon>Ecdysozoa</taxon>
        <taxon>Arthropoda</taxon>
        <taxon>Hexapoda</taxon>
        <taxon>Insecta</taxon>
        <taxon>Pterygota</taxon>
        <taxon>Neoptera</taxon>
        <taxon>Endopterygota</taxon>
        <taxon>Diptera</taxon>
        <taxon>Brachycera</taxon>
        <taxon>Muscomorpha</taxon>
        <taxon>Ephydroidea</taxon>
        <taxon>Drosophilidae</taxon>
        <taxon>Drosophila</taxon>
    </lineage>
</organism>
<comment type="function">
    <text evidence="2">Required for maturation of ribosomal RNAs and formation of the large ribosomal subunit.</text>
</comment>
<comment type="subcellular location">
    <subcellularLocation>
        <location evidence="2">Nucleus</location>
        <location evidence="2">Nucleolus</location>
    </subcellularLocation>
    <subcellularLocation>
        <location evidence="2">Nucleus</location>
        <location evidence="2">Nucleoplasm</location>
    </subcellularLocation>
</comment>
<comment type="similarity">
    <text evidence="2">Belongs to the pescadillo family.</text>
</comment>
<reference key="1">
    <citation type="journal article" date="2007" name="Nature">
        <title>Evolution of genes and genomes on the Drosophila phylogeny.</title>
        <authorList>
            <consortium name="Drosophila 12 genomes consortium"/>
        </authorList>
    </citation>
    <scope>NUCLEOTIDE SEQUENCE [LARGE SCALE GENOMIC DNA]</scope>
    <source>
        <strain>Tucson 15010-1051.87</strain>
    </source>
</reference>